<accession>P0DUS1</accession>
<accession>A0A7S8FJT8</accession>
<name>HACT1_HELAT</name>
<comment type="function">
    <text evidence="2">Peptide with unknown function. Has a limited effect on human peripheral blood mononuclear cells. Does not show activity against both Gram-positive and Gram-negative bacteria nor is it active on the 26 voltage-gated ion channels tested.</text>
</comment>
<comment type="subcellular location">
    <subcellularLocation>
        <location evidence="2">Secreted</location>
    </subcellularLocation>
    <subcellularLocation>
        <location evidence="4">Nematocyst</location>
    </subcellularLocation>
</comment>
<comment type="tissue specificity">
    <text evidence="2">Tentacle (ecto and/or endoderm tissue), and possibly also nematoblasts.</text>
</comment>
<comment type="mass spectrometry" mass="1354.65" method="MALDI" evidence="2"/>
<comment type="miscellaneous">
    <text evidence="4">Shows a propensity to bind albumin in aqueous solution, which opens up the possibility of using it as a carrier for directing albumin binding as well as potentially increasing half-life in serum.</text>
</comment>
<comment type="miscellaneous">
    <text evidence="2">The peptide is found in two different conformations which could be explained by a cis-trans isomerization at Pro-63.</text>
</comment>
<sequence length="69" mass="7925">MDRKFHLCLLLVILGTIIVQGAPLENENDADPDKPQKYRYYLKRATTEKKDNDPAKPGCHYTPFGLICF</sequence>
<keyword id="KW-0903">Direct protein sequencing</keyword>
<keyword id="KW-1015">Disulfide bond</keyword>
<keyword id="KW-0166">Nematocyst</keyword>
<keyword id="KW-0964">Secreted</keyword>
<keyword id="KW-0732">Signal</keyword>
<feature type="signal peptide" evidence="1">
    <location>
        <begin position="1"/>
        <end position="21"/>
    </location>
</feature>
<feature type="propeptide" id="PRO_0000453391" evidence="4">
    <location>
        <begin position="22"/>
        <end position="57"/>
    </location>
</feature>
<feature type="peptide" id="PRO_0000453392" description="Peptide Hact-1" evidence="2">
    <location>
        <begin position="58"/>
        <end position="69"/>
    </location>
</feature>
<feature type="disulfide bond" evidence="2">
    <location>
        <begin position="59"/>
        <end position="68"/>
    </location>
</feature>
<evidence type="ECO:0000255" key="1"/>
<evidence type="ECO:0000269" key="2">
    <source>
    </source>
</evidence>
<evidence type="ECO:0000303" key="3">
    <source>
    </source>
</evidence>
<evidence type="ECO:0000305" key="4">
    <source>
    </source>
</evidence>
<evidence type="ECO:0000312" key="5">
    <source>
        <dbReference type="EMBL" id="QPD07365.1"/>
    </source>
</evidence>
<organism evidence="5">
    <name type="scientific">Heliofungia actiniformis</name>
    <name type="common">Mushroom coral</name>
    <name type="synonym">Fungia actiniformis</name>
    <dbReference type="NCBI Taxonomy" id="75303"/>
    <lineage>
        <taxon>Eukaryota</taxon>
        <taxon>Metazoa</taxon>
        <taxon>Cnidaria</taxon>
        <taxon>Anthozoa</taxon>
        <taxon>Hexacorallia</taxon>
        <taxon>Scleractinia</taxon>
        <taxon>Fungiina</taxon>
        <taxon>Fungiidae</taxon>
        <taxon>Heliofungia</taxon>
    </lineage>
</organism>
<protein>
    <recommendedName>
        <fullName evidence="3">Peptide Hact-1</fullName>
    </recommendedName>
</protein>
<reference evidence="5" key="1">
    <citation type="journal article" date="2020" name="J. Nat. Prod.">
        <title>Identification and characterization of a peptide from the stony coral Heliofungia actiniformis.</title>
        <authorList>
            <person name="Schmidt C.A."/>
            <person name="Wilson D.T."/>
            <person name="Cooke I."/>
            <person name="Potriquet J."/>
            <person name="Tungatt K."/>
            <person name="Muruganandah V."/>
            <person name="Boote C."/>
            <person name="Kuek F."/>
            <person name="Miles J.J."/>
            <person name="Kupz A."/>
            <person name="Ryan S."/>
            <person name="Loukas A."/>
            <person name="Bansal P.S."/>
            <person name="Takjoo R."/>
            <person name="Miller D.J."/>
            <person name="Peigneur S."/>
            <person name="Tytgat J."/>
            <person name="Daly N.L."/>
        </authorList>
    </citation>
    <scope>NUCLEOTIDE SEQUENCE [GENOMIC DNA / MRNA]</scope>
    <scope>PROTEIN SEQUENCE OF 58-69</scope>
    <scope>MASS SPECTROMETRY</scope>
    <scope>DISULFIDE BOND</scope>
    <scope>TISSUE SPECIFICITY</scope>
    <scope>SUBCELLULAR LOCATION</scope>
    <scope>SYNTHESIS OF 58-69</scope>
    <scope>STRUCTURE BY NMR</scope>
    <source>
        <tissue>Tentacle</tissue>
    </source>
</reference>
<dbReference type="EMBL" id="MW115638">
    <property type="protein sequence ID" value="QPD07365.1"/>
    <property type="molecule type" value="mRNA"/>
</dbReference>
<dbReference type="GO" id="GO:0005576">
    <property type="term" value="C:extracellular region"/>
    <property type="evidence" value="ECO:0007669"/>
    <property type="project" value="UniProtKB-SubCell"/>
</dbReference>
<dbReference type="GO" id="GO:0042151">
    <property type="term" value="C:nematocyst"/>
    <property type="evidence" value="ECO:0007669"/>
    <property type="project" value="UniProtKB-SubCell"/>
</dbReference>
<proteinExistence type="evidence at protein level"/>